<proteinExistence type="inferred from homology"/>
<dbReference type="EC" id="6.1.1.3" evidence="1"/>
<dbReference type="EMBL" id="CP000248">
    <property type="protein sequence ID" value="ABD24652.1"/>
    <property type="molecule type" value="Genomic_DNA"/>
</dbReference>
<dbReference type="RefSeq" id="WP_011443866.1">
    <property type="nucleotide sequence ID" value="NC_007794.1"/>
</dbReference>
<dbReference type="SMR" id="Q2GBX1"/>
<dbReference type="STRING" id="279238.Saro_0204"/>
<dbReference type="KEGG" id="nar:Saro_0204"/>
<dbReference type="eggNOG" id="COG0441">
    <property type="taxonomic scope" value="Bacteria"/>
</dbReference>
<dbReference type="HOGENOM" id="CLU_008554_0_1_5"/>
<dbReference type="Proteomes" id="UP000009134">
    <property type="component" value="Chromosome"/>
</dbReference>
<dbReference type="GO" id="GO:0005829">
    <property type="term" value="C:cytosol"/>
    <property type="evidence" value="ECO:0007669"/>
    <property type="project" value="TreeGrafter"/>
</dbReference>
<dbReference type="GO" id="GO:0005524">
    <property type="term" value="F:ATP binding"/>
    <property type="evidence" value="ECO:0007669"/>
    <property type="project" value="UniProtKB-UniRule"/>
</dbReference>
<dbReference type="GO" id="GO:0046872">
    <property type="term" value="F:metal ion binding"/>
    <property type="evidence" value="ECO:0007669"/>
    <property type="project" value="UniProtKB-KW"/>
</dbReference>
<dbReference type="GO" id="GO:0004829">
    <property type="term" value="F:threonine-tRNA ligase activity"/>
    <property type="evidence" value="ECO:0007669"/>
    <property type="project" value="UniProtKB-UniRule"/>
</dbReference>
<dbReference type="GO" id="GO:0000049">
    <property type="term" value="F:tRNA binding"/>
    <property type="evidence" value="ECO:0007669"/>
    <property type="project" value="UniProtKB-KW"/>
</dbReference>
<dbReference type="GO" id="GO:0006435">
    <property type="term" value="P:threonyl-tRNA aminoacylation"/>
    <property type="evidence" value="ECO:0007669"/>
    <property type="project" value="UniProtKB-UniRule"/>
</dbReference>
<dbReference type="CDD" id="cd01667">
    <property type="entry name" value="TGS_ThrRS"/>
    <property type="match status" value="1"/>
</dbReference>
<dbReference type="CDD" id="cd00860">
    <property type="entry name" value="ThrRS_anticodon"/>
    <property type="match status" value="1"/>
</dbReference>
<dbReference type="CDD" id="cd00771">
    <property type="entry name" value="ThrRS_core"/>
    <property type="match status" value="1"/>
</dbReference>
<dbReference type="FunFam" id="3.10.20.30:FF:000005">
    <property type="entry name" value="Threonine--tRNA ligase"/>
    <property type="match status" value="1"/>
</dbReference>
<dbReference type="FunFam" id="3.30.930.10:FF:000002">
    <property type="entry name" value="Threonine--tRNA ligase"/>
    <property type="match status" value="1"/>
</dbReference>
<dbReference type="FunFam" id="3.40.50.800:FF:000001">
    <property type="entry name" value="Threonine--tRNA ligase"/>
    <property type="match status" value="1"/>
</dbReference>
<dbReference type="FunFam" id="3.30.980.10:FF:000005">
    <property type="entry name" value="Threonyl-tRNA synthetase, mitochondrial"/>
    <property type="match status" value="1"/>
</dbReference>
<dbReference type="Gene3D" id="3.10.20.30">
    <property type="match status" value="1"/>
</dbReference>
<dbReference type="Gene3D" id="3.30.54.20">
    <property type="match status" value="1"/>
</dbReference>
<dbReference type="Gene3D" id="3.40.50.800">
    <property type="entry name" value="Anticodon-binding domain"/>
    <property type="match status" value="1"/>
</dbReference>
<dbReference type="Gene3D" id="3.30.930.10">
    <property type="entry name" value="Bira Bifunctional Protein, Domain 2"/>
    <property type="match status" value="1"/>
</dbReference>
<dbReference type="Gene3D" id="3.30.980.10">
    <property type="entry name" value="Threonyl-trna Synthetase, Chain A, domain 2"/>
    <property type="match status" value="1"/>
</dbReference>
<dbReference type="HAMAP" id="MF_00184">
    <property type="entry name" value="Thr_tRNA_synth"/>
    <property type="match status" value="1"/>
</dbReference>
<dbReference type="InterPro" id="IPR002314">
    <property type="entry name" value="aa-tRNA-synt_IIb"/>
</dbReference>
<dbReference type="InterPro" id="IPR006195">
    <property type="entry name" value="aa-tRNA-synth_II"/>
</dbReference>
<dbReference type="InterPro" id="IPR045864">
    <property type="entry name" value="aa-tRNA-synth_II/BPL/LPL"/>
</dbReference>
<dbReference type="InterPro" id="IPR004154">
    <property type="entry name" value="Anticodon-bd"/>
</dbReference>
<dbReference type="InterPro" id="IPR036621">
    <property type="entry name" value="Anticodon-bd_dom_sf"/>
</dbReference>
<dbReference type="InterPro" id="IPR012675">
    <property type="entry name" value="Beta-grasp_dom_sf"/>
</dbReference>
<dbReference type="InterPro" id="IPR004095">
    <property type="entry name" value="TGS"/>
</dbReference>
<dbReference type="InterPro" id="IPR012676">
    <property type="entry name" value="TGS-like"/>
</dbReference>
<dbReference type="InterPro" id="IPR002320">
    <property type="entry name" value="Thr-tRNA-ligase_IIa"/>
</dbReference>
<dbReference type="InterPro" id="IPR018163">
    <property type="entry name" value="Thr/Ala-tRNA-synth_IIc_edit"/>
</dbReference>
<dbReference type="InterPro" id="IPR047246">
    <property type="entry name" value="ThrRS_anticodon"/>
</dbReference>
<dbReference type="InterPro" id="IPR033728">
    <property type="entry name" value="ThrRS_core"/>
</dbReference>
<dbReference type="InterPro" id="IPR012947">
    <property type="entry name" value="tRNA_SAD"/>
</dbReference>
<dbReference type="NCBIfam" id="TIGR00418">
    <property type="entry name" value="thrS"/>
    <property type="match status" value="1"/>
</dbReference>
<dbReference type="PANTHER" id="PTHR11451:SF44">
    <property type="entry name" value="THREONINE--TRNA LIGASE, CHLOROPLASTIC_MITOCHONDRIAL 2"/>
    <property type="match status" value="1"/>
</dbReference>
<dbReference type="PANTHER" id="PTHR11451">
    <property type="entry name" value="THREONINE-TRNA LIGASE"/>
    <property type="match status" value="1"/>
</dbReference>
<dbReference type="Pfam" id="PF03129">
    <property type="entry name" value="HGTP_anticodon"/>
    <property type="match status" value="1"/>
</dbReference>
<dbReference type="Pfam" id="PF02824">
    <property type="entry name" value="TGS"/>
    <property type="match status" value="1"/>
</dbReference>
<dbReference type="Pfam" id="PF00587">
    <property type="entry name" value="tRNA-synt_2b"/>
    <property type="match status" value="1"/>
</dbReference>
<dbReference type="Pfam" id="PF07973">
    <property type="entry name" value="tRNA_SAD"/>
    <property type="match status" value="1"/>
</dbReference>
<dbReference type="PRINTS" id="PR01047">
    <property type="entry name" value="TRNASYNTHTHR"/>
</dbReference>
<dbReference type="SMART" id="SM00863">
    <property type="entry name" value="tRNA_SAD"/>
    <property type="match status" value="1"/>
</dbReference>
<dbReference type="SUPFAM" id="SSF52954">
    <property type="entry name" value="Class II aaRS ABD-related"/>
    <property type="match status" value="1"/>
</dbReference>
<dbReference type="SUPFAM" id="SSF55681">
    <property type="entry name" value="Class II aaRS and biotin synthetases"/>
    <property type="match status" value="1"/>
</dbReference>
<dbReference type="SUPFAM" id="SSF81271">
    <property type="entry name" value="TGS-like"/>
    <property type="match status" value="1"/>
</dbReference>
<dbReference type="SUPFAM" id="SSF55186">
    <property type="entry name" value="ThrRS/AlaRS common domain"/>
    <property type="match status" value="1"/>
</dbReference>
<dbReference type="PROSITE" id="PS50862">
    <property type="entry name" value="AA_TRNA_LIGASE_II"/>
    <property type="match status" value="1"/>
</dbReference>
<dbReference type="PROSITE" id="PS51880">
    <property type="entry name" value="TGS"/>
    <property type="match status" value="1"/>
</dbReference>
<name>SYT_NOVAD</name>
<protein>
    <recommendedName>
        <fullName evidence="1">Threonine--tRNA ligase</fullName>
        <ecNumber evidence="1">6.1.1.3</ecNumber>
    </recommendedName>
    <alternativeName>
        <fullName evidence="1">Threonyl-tRNA synthetase</fullName>
        <shortName evidence="1">ThrRS</shortName>
    </alternativeName>
</protein>
<organism>
    <name type="scientific">Novosphingobium aromaticivorans (strain ATCC 700278 / DSM 12444 / CCUG 56034 / CIP 105152 / NBRC 16084 / F199)</name>
    <dbReference type="NCBI Taxonomy" id="279238"/>
    <lineage>
        <taxon>Bacteria</taxon>
        <taxon>Pseudomonadati</taxon>
        <taxon>Pseudomonadota</taxon>
        <taxon>Alphaproteobacteria</taxon>
        <taxon>Sphingomonadales</taxon>
        <taxon>Sphingomonadaceae</taxon>
        <taxon>Novosphingobium</taxon>
    </lineage>
</organism>
<evidence type="ECO:0000255" key="1">
    <source>
        <dbReference type="HAMAP-Rule" id="MF_00184"/>
    </source>
</evidence>
<evidence type="ECO:0000255" key="2">
    <source>
        <dbReference type="PROSITE-ProRule" id="PRU01228"/>
    </source>
</evidence>
<feature type="chain" id="PRO_1000020453" description="Threonine--tRNA ligase">
    <location>
        <begin position="1"/>
        <end position="664"/>
    </location>
</feature>
<feature type="domain" description="TGS" evidence="2">
    <location>
        <begin position="1"/>
        <end position="64"/>
    </location>
</feature>
<feature type="region of interest" description="Catalytic" evidence="1">
    <location>
        <begin position="250"/>
        <end position="559"/>
    </location>
</feature>
<feature type="binding site" evidence="1">
    <location>
        <position position="355"/>
    </location>
    <ligand>
        <name>Zn(2+)</name>
        <dbReference type="ChEBI" id="CHEBI:29105"/>
    </ligand>
</feature>
<feature type="binding site" evidence="1">
    <location>
        <position position="406"/>
    </location>
    <ligand>
        <name>Zn(2+)</name>
        <dbReference type="ChEBI" id="CHEBI:29105"/>
    </ligand>
</feature>
<feature type="binding site" evidence="1">
    <location>
        <position position="536"/>
    </location>
    <ligand>
        <name>Zn(2+)</name>
        <dbReference type="ChEBI" id="CHEBI:29105"/>
    </ligand>
</feature>
<reference key="1">
    <citation type="submission" date="2006-01" db="EMBL/GenBank/DDBJ databases">
        <title>Complete sequence of Novosphingobium aromaticivorans DSM 12444.</title>
        <authorList>
            <consortium name="US DOE Joint Genome Institute"/>
            <person name="Copeland A."/>
            <person name="Lucas S."/>
            <person name="Lapidus A."/>
            <person name="Barry K."/>
            <person name="Detter J.C."/>
            <person name="Glavina T."/>
            <person name="Hammon N."/>
            <person name="Israni S."/>
            <person name="Pitluck S."/>
            <person name="Chain P."/>
            <person name="Malfatti S."/>
            <person name="Shin M."/>
            <person name="Vergez L."/>
            <person name="Schmutz J."/>
            <person name="Larimer F."/>
            <person name="Land M."/>
            <person name="Kyrpides N."/>
            <person name="Ivanova N."/>
            <person name="Fredrickson J."/>
            <person name="Balkwill D."/>
            <person name="Romine M.F."/>
            <person name="Richardson P."/>
        </authorList>
    </citation>
    <scope>NUCLEOTIDE SEQUENCE [LARGE SCALE GENOMIC DNA]</scope>
    <source>
        <strain>ATCC 700278 / DSM 12444 / CCUG 56034 / CIP 105152 / NBRC 16084 / F199</strain>
    </source>
</reference>
<accession>Q2GBX1</accession>
<comment type="function">
    <text evidence="1">Catalyzes the attachment of threonine to tRNA(Thr) in a two-step reaction: L-threonine is first activated by ATP to form Thr-AMP and then transferred to the acceptor end of tRNA(Thr). Also edits incorrectly charged L-seryl-tRNA(Thr).</text>
</comment>
<comment type="catalytic activity">
    <reaction evidence="1">
        <text>tRNA(Thr) + L-threonine + ATP = L-threonyl-tRNA(Thr) + AMP + diphosphate + H(+)</text>
        <dbReference type="Rhea" id="RHEA:24624"/>
        <dbReference type="Rhea" id="RHEA-COMP:9670"/>
        <dbReference type="Rhea" id="RHEA-COMP:9704"/>
        <dbReference type="ChEBI" id="CHEBI:15378"/>
        <dbReference type="ChEBI" id="CHEBI:30616"/>
        <dbReference type="ChEBI" id="CHEBI:33019"/>
        <dbReference type="ChEBI" id="CHEBI:57926"/>
        <dbReference type="ChEBI" id="CHEBI:78442"/>
        <dbReference type="ChEBI" id="CHEBI:78534"/>
        <dbReference type="ChEBI" id="CHEBI:456215"/>
        <dbReference type="EC" id="6.1.1.3"/>
    </reaction>
</comment>
<comment type="cofactor">
    <cofactor evidence="1">
        <name>Zn(2+)</name>
        <dbReference type="ChEBI" id="CHEBI:29105"/>
    </cofactor>
    <text evidence="1">Binds 1 zinc ion per subunit.</text>
</comment>
<comment type="subunit">
    <text evidence="1">Homodimer.</text>
</comment>
<comment type="subcellular location">
    <subcellularLocation>
        <location evidence="1">Cytoplasm</location>
    </subcellularLocation>
</comment>
<comment type="similarity">
    <text evidence="1">Belongs to the class-II aminoacyl-tRNA synthetase family.</text>
</comment>
<gene>
    <name evidence="1" type="primary">thrS</name>
    <name type="ordered locus">Saro_0204</name>
</gene>
<keyword id="KW-0030">Aminoacyl-tRNA synthetase</keyword>
<keyword id="KW-0067">ATP-binding</keyword>
<keyword id="KW-0963">Cytoplasm</keyword>
<keyword id="KW-0436">Ligase</keyword>
<keyword id="KW-0479">Metal-binding</keyword>
<keyword id="KW-0547">Nucleotide-binding</keyword>
<keyword id="KW-0648">Protein biosynthesis</keyword>
<keyword id="KW-1185">Reference proteome</keyword>
<keyword id="KW-0694">RNA-binding</keyword>
<keyword id="KW-0820">tRNA-binding</keyword>
<keyword id="KW-0862">Zinc</keyword>
<sequence>MSELLKITLPDGSVREVAPGSTPADIAAAIGPGLAKAALAAKVDGELVDLTRPFTADAQLALVTAKDEAEALDLARHDYAHVLAEAVQALFPGTQITFGPSTDDGFYYDFAPKDRPFTDEDLPAIEAEMRKIIAANKPLRREVWSREQLISRWKQQGESFKAEWAAELPENEELTVYWSGDDWLDMCRGPHLPSTGKLDPNAFKLTRVSGAYWRGDQKNAMLSRVYGTGWLNKKQLDAHLTRLEEAAKRDHRKLGNEMDLFHLQQEAHGSVFWHPKGYLIWRELEAYMRRAIDGAGYREVKTPQVMDARQWEQSGHWGKYRENMFVIPDEVPNVDDEGPIVSNDADWMALKPMNCPAHVLIFRQGIKSYRELPLRLYENGCCHRNEPHGALHGLMRVRQFTQDDAHIFCREDQIVSEVQAFCELADRIYKHFGFTYSIKLALRPEKRFGTEEMWDKAERELRDAVVRAGLATEEYGWEELPGEGAFYAPKLEWHLTDAIGRTWQVGTIQSDRVLPERLDASYIGEDGEKHRPVMLHRAIFGSYERFIGILIEHFAGRLPVWLAPVQAVVATIVSDADDYARDALAKLKAAGIRADTDLRNEKINYKVREHSLQKVPYLLVVGKREAEEGTVAIRILGEQHQKVMPLDEAIALLKGEATAPDLRA</sequence>